<dbReference type="EC" id="2.1.1.-" evidence="1"/>
<dbReference type="EMBL" id="BN001306">
    <property type="protein sequence ID" value="CBF82267.1"/>
    <property type="molecule type" value="Genomic_DNA"/>
</dbReference>
<dbReference type="EMBL" id="AACD01000170">
    <property type="protein sequence ID" value="EAA61524.1"/>
    <property type="molecule type" value="Genomic_DNA"/>
</dbReference>
<dbReference type="RefSeq" id="XP_682502.1">
    <property type="nucleotide sequence ID" value="XM_677410.1"/>
</dbReference>
<dbReference type="SMR" id="Q5AR47"/>
<dbReference type="EnsemblFungi" id="CBF82267">
    <property type="protein sequence ID" value="CBF82267"/>
    <property type="gene ID" value="ANIA_09233"/>
</dbReference>
<dbReference type="KEGG" id="ani:ANIA_09233"/>
<dbReference type="eggNOG" id="KOG3178">
    <property type="taxonomic scope" value="Eukaryota"/>
</dbReference>
<dbReference type="HOGENOM" id="CLU_005533_5_0_1"/>
<dbReference type="InParanoid" id="Q5AR47"/>
<dbReference type="OMA" id="NTMGARK"/>
<dbReference type="OrthoDB" id="1535081at2759"/>
<dbReference type="Proteomes" id="UP000000560">
    <property type="component" value="Chromosome VI"/>
</dbReference>
<dbReference type="GO" id="GO:0008171">
    <property type="term" value="F:O-methyltransferase activity"/>
    <property type="evidence" value="ECO:0007669"/>
    <property type="project" value="InterPro"/>
</dbReference>
<dbReference type="GO" id="GO:0032259">
    <property type="term" value="P:methylation"/>
    <property type="evidence" value="ECO:0007669"/>
    <property type="project" value="UniProtKB-KW"/>
</dbReference>
<dbReference type="GO" id="GO:0044550">
    <property type="term" value="P:secondary metabolite biosynthetic process"/>
    <property type="evidence" value="ECO:0007669"/>
    <property type="project" value="UniProtKB-ARBA"/>
</dbReference>
<dbReference type="Gene3D" id="3.40.50.150">
    <property type="entry name" value="Vaccinia Virus protein VP39"/>
    <property type="match status" value="1"/>
</dbReference>
<dbReference type="Gene3D" id="1.10.10.10">
    <property type="entry name" value="Winged helix-like DNA-binding domain superfamily/Winged helix DNA-binding domain"/>
    <property type="match status" value="1"/>
</dbReference>
<dbReference type="InterPro" id="IPR016461">
    <property type="entry name" value="COMT-like"/>
</dbReference>
<dbReference type="InterPro" id="IPR001077">
    <property type="entry name" value="O_MeTrfase_dom"/>
</dbReference>
<dbReference type="InterPro" id="IPR029063">
    <property type="entry name" value="SAM-dependent_MTases_sf"/>
</dbReference>
<dbReference type="InterPro" id="IPR036388">
    <property type="entry name" value="WH-like_DNA-bd_sf"/>
</dbReference>
<dbReference type="InterPro" id="IPR036390">
    <property type="entry name" value="WH_DNA-bd_sf"/>
</dbReference>
<dbReference type="PANTHER" id="PTHR43712:SF1">
    <property type="entry name" value="HYPOTHETICAL O-METHYLTRANSFERASE (EUROFUNG)-RELATED"/>
    <property type="match status" value="1"/>
</dbReference>
<dbReference type="PANTHER" id="PTHR43712">
    <property type="entry name" value="PUTATIVE (AFU_ORTHOLOGUE AFUA_4G14580)-RELATED"/>
    <property type="match status" value="1"/>
</dbReference>
<dbReference type="Pfam" id="PF00891">
    <property type="entry name" value="Methyltransf_2"/>
    <property type="match status" value="1"/>
</dbReference>
<dbReference type="PIRSF" id="PIRSF005739">
    <property type="entry name" value="O-mtase"/>
    <property type="match status" value="1"/>
</dbReference>
<dbReference type="SUPFAM" id="SSF53335">
    <property type="entry name" value="S-adenosyl-L-methionine-dependent methyltransferases"/>
    <property type="match status" value="1"/>
</dbReference>
<dbReference type="SUPFAM" id="SSF46785">
    <property type="entry name" value="Winged helix' DNA-binding domain"/>
    <property type="match status" value="1"/>
</dbReference>
<dbReference type="PROSITE" id="PS51683">
    <property type="entry name" value="SAM_OMT_II"/>
    <property type="match status" value="1"/>
</dbReference>
<gene>
    <name evidence="3" type="primary">asqD</name>
    <name type="ORF">AN9233</name>
</gene>
<reference key="1">
    <citation type="journal article" date="2005" name="Nature">
        <title>Sequencing of Aspergillus nidulans and comparative analysis with A. fumigatus and A. oryzae.</title>
        <authorList>
            <person name="Galagan J.E."/>
            <person name="Calvo S.E."/>
            <person name="Cuomo C."/>
            <person name="Ma L.-J."/>
            <person name="Wortman J.R."/>
            <person name="Batzoglou S."/>
            <person name="Lee S.-I."/>
            <person name="Bastuerkmen M."/>
            <person name="Spevak C.C."/>
            <person name="Clutterbuck J."/>
            <person name="Kapitonov V."/>
            <person name="Jurka J."/>
            <person name="Scazzocchio C."/>
            <person name="Farman M.L."/>
            <person name="Butler J."/>
            <person name="Purcell S."/>
            <person name="Harris S."/>
            <person name="Braus G.H."/>
            <person name="Draht O."/>
            <person name="Busch S."/>
            <person name="D'Enfert C."/>
            <person name="Bouchier C."/>
            <person name="Goldman G.H."/>
            <person name="Bell-Pedersen D."/>
            <person name="Griffiths-Jones S."/>
            <person name="Doonan J.H."/>
            <person name="Yu J."/>
            <person name="Vienken K."/>
            <person name="Pain A."/>
            <person name="Freitag M."/>
            <person name="Selker E.U."/>
            <person name="Archer D.B."/>
            <person name="Penalva M.A."/>
            <person name="Oakley B.R."/>
            <person name="Momany M."/>
            <person name="Tanaka T."/>
            <person name="Kumagai T."/>
            <person name="Asai K."/>
            <person name="Machida M."/>
            <person name="Nierman W.C."/>
            <person name="Denning D.W."/>
            <person name="Caddick M.X."/>
            <person name="Hynes M."/>
            <person name="Paoletti M."/>
            <person name="Fischer R."/>
            <person name="Miller B.L."/>
            <person name="Dyer P.S."/>
            <person name="Sachs M.S."/>
            <person name="Osmani S.A."/>
            <person name="Birren B.W."/>
        </authorList>
    </citation>
    <scope>NUCLEOTIDE SEQUENCE [LARGE SCALE GENOMIC DNA]</scope>
    <source>
        <strain>FGSC A4 / ATCC 38163 / CBS 112.46 / NRRL 194 / M139</strain>
    </source>
</reference>
<reference key="2">
    <citation type="journal article" date="2009" name="Fungal Genet. Biol.">
        <title>The 2008 update of the Aspergillus nidulans genome annotation: a community effort.</title>
        <authorList>
            <person name="Wortman J.R."/>
            <person name="Gilsenan J.M."/>
            <person name="Joardar V."/>
            <person name="Deegan J."/>
            <person name="Clutterbuck J."/>
            <person name="Andersen M.R."/>
            <person name="Archer D."/>
            <person name="Bencina M."/>
            <person name="Braus G."/>
            <person name="Coutinho P."/>
            <person name="von Dohren H."/>
            <person name="Doonan J."/>
            <person name="Driessen A.J."/>
            <person name="Durek P."/>
            <person name="Espeso E."/>
            <person name="Fekete E."/>
            <person name="Flipphi M."/>
            <person name="Estrada C.G."/>
            <person name="Geysens S."/>
            <person name="Goldman G."/>
            <person name="de Groot P.W."/>
            <person name="Hansen K."/>
            <person name="Harris S.D."/>
            <person name="Heinekamp T."/>
            <person name="Helmstaedt K."/>
            <person name="Henrissat B."/>
            <person name="Hofmann G."/>
            <person name="Homan T."/>
            <person name="Horio T."/>
            <person name="Horiuchi H."/>
            <person name="James S."/>
            <person name="Jones M."/>
            <person name="Karaffa L."/>
            <person name="Karanyi Z."/>
            <person name="Kato M."/>
            <person name="Keller N."/>
            <person name="Kelly D.E."/>
            <person name="Kiel J.A."/>
            <person name="Kim J.M."/>
            <person name="van der Klei I.J."/>
            <person name="Klis F.M."/>
            <person name="Kovalchuk A."/>
            <person name="Krasevec N."/>
            <person name="Kubicek C.P."/>
            <person name="Liu B."/>
            <person name="Maccabe A."/>
            <person name="Meyer V."/>
            <person name="Mirabito P."/>
            <person name="Miskei M."/>
            <person name="Mos M."/>
            <person name="Mullins J."/>
            <person name="Nelson D.R."/>
            <person name="Nielsen J."/>
            <person name="Oakley B.R."/>
            <person name="Osmani S.A."/>
            <person name="Pakula T."/>
            <person name="Paszewski A."/>
            <person name="Paulsen I."/>
            <person name="Pilsyk S."/>
            <person name="Pocsi I."/>
            <person name="Punt P.J."/>
            <person name="Ram A.F."/>
            <person name="Ren Q."/>
            <person name="Robellet X."/>
            <person name="Robson G."/>
            <person name="Seiboth B."/>
            <person name="van Solingen P."/>
            <person name="Specht T."/>
            <person name="Sun J."/>
            <person name="Taheri-Talesh N."/>
            <person name="Takeshita N."/>
            <person name="Ussery D."/>
            <person name="vanKuyk P.A."/>
            <person name="Visser H."/>
            <person name="van de Vondervoort P.J."/>
            <person name="de Vries R.P."/>
            <person name="Walton J."/>
            <person name="Xiang X."/>
            <person name="Xiong Y."/>
            <person name="Zeng A.P."/>
            <person name="Brandt B.W."/>
            <person name="Cornell M.J."/>
            <person name="van den Hondel C.A."/>
            <person name="Visser J."/>
            <person name="Oliver S.G."/>
            <person name="Turner G."/>
        </authorList>
    </citation>
    <scope>GENOME REANNOTATION</scope>
    <source>
        <strain>FGSC A4 / ATCC 38163 / CBS 112.46 / NRRL 194 / M139</strain>
    </source>
</reference>
<reference key="3">
    <citation type="journal article" date="2014" name="Angew. Chem. Int. Ed.">
        <title>Non-heme dioxygenase catalyzes atypical oxidations of 6,7-bicyclic systems to form the 6,6-quinolone core of viridicatin-type fungal alkaloids.</title>
        <authorList>
            <person name="Ishikawa N."/>
            <person name="Tanaka H."/>
            <person name="Koyama F."/>
            <person name="Noguchi H."/>
            <person name="Wang C.C."/>
            <person name="Hotta K."/>
            <person name="Watanabe K."/>
        </authorList>
    </citation>
    <scope>FUNCTION</scope>
    <scope>PATHWAY</scope>
</reference>
<name>ASQD_EMENI</name>
<feature type="chain" id="PRO_0000437632" description="O-methyltransferase asqD">
    <location>
        <begin position="1"/>
        <end position="387"/>
    </location>
</feature>
<feature type="active site" description="Proton acceptor" evidence="1">
    <location>
        <position position="294"/>
    </location>
</feature>
<feature type="binding site" evidence="1">
    <location>
        <position position="252"/>
    </location>
    <ligand>
        <name>S-adenosyl-L-methionine</name>
        <dbReference type="ChEBI" id="CHEBI:59789"/>
    </ligand>
</feature>
<protein>
    <recommendedName>
        <fullName evidence="3">O-methyltransferase asqD</fullName>
        <ecNumber evidence="1">2.1.1.-</ecNumber>
    </recommendedName>
    <alternativeName>
        <fullName evidence="4">4'-methoxyviridicatin/aspoquinolone biosynthesis cluster protein asqD</fullName>
    </alternativeName>
    <alternativeName>
        <fullName evidence="3">Aspoquinolone biosynthesis protein D</fullName>
    </alternativeName>
</protein>
<proteinExistence type="inferred from homology"/>
<keyword id="KW-0489">Methyltransferase</keyword>
<keyword id="KW-1185">Reference proteome</keyword>
<keyword id="KW-0949">S-adenosyl-L-methionine</keyword>
<keyword id="KW-0808">Transferase</keyword>
<comment type="function">
    <text evidence="2 4">O-methyltransferase; part of the gene cluster that mediates the biosynthesis of the aspoquinolone mycotoxins (PubMed:25251934). The role of asqD within the aspoquinolone pathway has still to be determined (Probable). The first step of the pathway is catalyzed by the nonribosomal peptide synthetase asqK that condenses anthranilic acid and O-methyl-L-tyrosine to produce 4'-methoxycyclopeptin. 4'-methoxycyclopeptin is then converted to 4'-methoxydehydrocyclopeptin by the ketoglutarate-dependent dioxygenase asqJ. AsqJ also converts its first product 4'-methoxydehydrocyclopeptin to 4'-methoxycyclopenin. The following conversion of 4'-methoxycyclopenin into 4'-methoxyviridicatin is catalyzed by the cyclopenase asqI. 4'-methoxyviridicatin is the precursor of quinolone natural products, and is further converted to quinolinone B. The prenyltransferase asqH1 then catalyzes the canonical Friedel-Crafts alkylation of quinolinone B with dimethylallyl cation to yield dimethylallyl quinolone, which is subjected to FAD-dependent dehydrogenation by the FAD-linked oxidoreductase asqF to yield conjugated aryl diene. The delta(3') double bond then serves as the site of the second alkylation with DMAPP catalyzed by the prenyltransferase asqH2 to yield a carbenium ion intermediate, which can be attacked by H(2)O to yield a styrenyl quinolone containing a C3'-hydroxyprenyl chain. The FAD-dependent monooxygenase asqG performs epoxidation of the terminal C7'-C8' olefin. Finally, after dehydratation of the epoxide at C3 by asqC, the quinolone epoxide rearrangement protein asqO catalyzes an enzymatic 3-exo-tet cyclization to yield the cyclopropyl-THF ring system in aspoquinolone (Probable).</text>
</comment>
<comment type="pathway">
    <text evidence="5">Secondary metabolite biosynthesis.</text>
</comment>
<comment type="pathway">
    <text evidence="5">Alkaloid biosynthesis.</text>
</comment>
<comment type="pathway">
    <text evidence="5">Mycotoxin biosynthesis.</text>
</comment>
<comment type="similarity">
    <text evidence="4">Belongs to the class I-like SAM-binding methyltransferase superfamily. Cation-independent O-methyltransferase family.</text>
</comment>
<accession>Q5AR47</accession>
<accession>C8VJP6</accession>
<sequence>MPVENEFPRELPNHSLISSKSQMTLQSIWLFRYPVSSIVCVQFPTDFPKPVLALSARIAIDLGLFTHIVQKCPITSRSLAAITGAEELLITRILRLLSTAHFAEETSTGTWAPTPITKTMAKEEIAAGYRFICHMVVPALQSAPGYFQHHGYSCPTDAKDGLVQHALQTKKTSFEYIMSDPHLLKDFNLFMGNGMGARKSWLDWYPVQSNILDGADADPDKALIVDVGGGKGHDLIAFHKRYPNAGRLVLEDLPAAFDDLGQYSMVIEKVPHDFLAEAQPVKGAKAYLCHHILHDWPDNYCVRILEGISSAMTPGYSKLLLHEGIVPEKGVCQFQAMSDIATMACNGGMERTREQWRTLLHMAGLQLIRFWNSPDEGGDGIIEAAKV</sequence>
<organism>
    <name type="scientific">Emericella nidulans (strain FGSC A4 / ATCC 38163 / CBS 112.46 / NRRL 194 / M139)</name>
    <name type="common">Aspergillus nidulans</name>
    <dbReference type="NCBI Taxonomy" id="227321"/>
    <lineage>
        <taxon>Eukaryota</taxon>
        <taxon>Fungi</taxon>
        <taxon>Dikarya</taxon>
        <taxon>Ascomycota</taxon>
        <taxon>Pezizomycotina</taxon>
        <taxon>Eurotiomycetes</taxon>
        <taxon>Eurotiomycetidae</taxon>
        <taxon>Eurotiales</taxon>
        <taxon>Aspergillaceae</taxon>
        <taxon>Aspergillus</taxon>
        <taxon>Aspergillus subgen. Nidulantes</taxon>
    </lineage>
</organism>
<evidence type="ECO:0000255" key="1">
    <source>
        <dbReference type="PROSITE-ProRule" id="PRU01020"/>
    </source>
</evidence>
<evidence type="ECO:0000269" key="2">
    <source>
    </source>
</evidence>
<evidence type="ECO:0000303" key="3">
    <source>
    </source>
</evidence>
<evidence type="ECO:0000305" key="4"/>
<evidence type="ECO:0000305" key="5">
    <source>
    </source>
</evidence>